<comment type="function">
    <text evidence="1">Specifically dimethylates two adjacent adenosines (A1518 and A1519) in the loop of a conserved hairpin near the 3'-end of 16S rRNA in the 30S particle. May play a critical role in biogenesis of 30S subunits.</text>
</comment>
<comment type="catalytic activity">
    <reaction evidence="1">
        <text>adenosine(1518)/adenosine(1519) in 16S rRNA + 4 S-adenosyl-L-methionine = N(6)-dimethyladenosine(1518)/N(6)-dimethyladenosine(1519) in 16S rRNA + 4 S-adenosyl-L-homocysteine + 4 H(+)</text>
        <dbReference type="Rhea" id="RHEA:19609"/>
        <dbReference type="Rhea" id="RHEA-COMP:10232"/>
        <dbReference type="Rhea" id="RHEA-COMP:10233"/>
        <dbReference type="ChEBI" id="CHEBI:15378"/>
        <dbReference type="ChEBI" id="CHEBI:57856"/>
        <dbReference type="ChEBI" id="CHEBI:59789"/>
        <dbReference type="ChEBI" id="CHEBI:74411"/>
        <dbReference type="ChEBI" id="CHEBI:74493"/>
        <dbReference type="EC" id="2.1.1.182"/>
    </reaction>
</comment>
<comment type="subcellular location">
    <subcellularLocation>
        <location evidence="1">Cytoplasm</location>
    </subcellularLocation>
</comment>
<comment type="similarity">
    <text evidence="1">Belongs to the class I-like SAM-binding methyltransferase superfamily. rRNA adenine N(6)-methyltransferase family. RsmA subfamily.</text>
</comment>
<name>RSMA_TREPS</name>
<keyword id="KW-0963">Cytoplasm</keyword>
<keyword id="KW-0489">Methyltransferase</keyword>
<keyword id="KW-0694">RNA-binding</keyword>
<keyword id="KW-0698">rRNA processing</keyword>
<keyword id="KW-0949">S-adenosyl-L-methionine</keyword>
<keyword id="KW-0808">Transferase</keyword>
<protein>
    <recommendedName>
        <fullName evidence="1">Ribosomal RNA small subunit methyltransferase A</fullName>
        <ecNumber evidence="1">2.1.1.182</ecNumber>
    </recommendedName>
    <alternativeName>
        <fullName evidence="1">16S rRNA (adenine(1518)-N(6)/adenine(1519)-N(6))-dimethyltransferase</fullName>
    </alternativeName>
    <alternativeName>
        <fullName evidence="1">16S rRNA dimethyladenosine transferase</fullName>
    </alternativeName>
    <alternativeName>
        <fullName evidence="1">16S rRNA dimethylase</fullName>
    </alternativeName>
    <alternativeName>
        <fullName evidence="1">S-adenosylmethionine-6-N', N'-adenosyl(rRNA) dimethyltransferase</fullName>
    </alternativeName>
</protein>
<feature type="chain" id="PRO_1000130332" description="Ribosomal RNA small subunit methyltransferase A">
    <location>
        <begin position="1"/>
        <end position="285"/>
    </location>
</feature>
<feature type="binding site" evidence="1">
    <location>
        <position position="30"/>
    </location>
    <ligand>
        <name>S-adenosyl-L-methionine</name>
        <dbReference type="ChEBI" id="CHEBI:59789"/>
    </ligand>
</feature>
<feature type="binding site" evidence="1">
    <location>
        <position position="32"/>
    </location>
    <ligand>
        <name>S-adenosyl-L-methionine</name>
        <dbReference type="ChEBI" id="CHEBI:59789"/>
    </ligand>
</feature>
<feature type="binding site" evidence="1">
    <location>
        <position position="57"/>
    </location>
    <ligand>
        <name>S-adenosyl-L-methionine</name>
        <dbReference type="ChEBI" id="CHEBI:59789"/>
    </ligand>
</feature>
<feature type="binding site" evidence="1">
    <location>
        <position position="78"/>
    </location>
    <ligand>
        <name>S-adenosyl-L-methionine</name>
        <dbReference type="ChEBI" id="CHEBI:59789"/>
    </ligand>
</feature>
<feature type="binding site" evidence="1">
    <location>
        <position position="101"/>
    </location>
    <ligand>
        <name>S-adenosyl-L-methionine</name>
        <dbReference type="ChEBI" id="CHEBI:59789"/>
    </ligand>
</feature>
<feature type="binding site" evidence="1">
    <location>
        <position position="121"/>
    </location>
    <ligand>
        <name>S-adenosyl-L-methionine</name>
        <dbReference type="ChEBI" id="CHEBI:59789"/>
    </ligand>
</feature>
<gene>
    <name evidence="1" type="primary">rsmA</name>
    <name evidence="1" type="synonym">ksgA</name>
    <name type="ordered locus">TPASS_0337</name>
</gene>
<organism>
    <name type="scientific">Treponema pallidum subsp. pallidum (strain SS14)</name>
    <dbReference type="NCBI Taxonomy" id="455434"/>
    <lineage>
        <taxon>Bacteria</taxon>
        <taxon>Pseudomonadati</taxon>
        <taxon>Spirochaetota</taxon>
        <taxon>Spirochaetia</taxon>
        <taxon>Spirochaetales</taxon>
        <taxon>Treponemataceae</taxon>
        <taxon>Treponema</taxon>
    </lineage>
</organism>
<evidence type="ECO:0000255" key="1">
    <source>
        <dbReference type="HAMAP-Rule" id="MF_00607"/>
    </source>
</evidence>
<sequence>MCCPNYNSARALAQFLTERGLRMHKKWGQNFLLDPVLRTQLVKILAPERGERVWEIGAGIGAMTALLVQNSDFLTVFEIDRGFVQTLRKLFDAHVRVIEGDVLQQWHAAAAQEQPACVLGNLPYNIAARFIGNTIESGYIFKRMVVTVQKEIGLRMTALPAQKWYSYFSVLCQWQYEVRVIRNVAPVCFWPRPHVVSQALVLTKRNAVPSCVDPALFLHVTKTLFSARRKTVRNNLLTWQKRMPGGAAVCVEELCARAGIDARARAEQLSIYDFITLSDTLRALL</sequence>
<reference key="1">
    <citation type="journal article" date="2008" name="BMC Microbiol.">
        <title>Complete genome sequence of Treponema pallidum ssp. pallidum strain SS14 determined with oligonucleotide arrays.</title>
        <authorList>
            <person name="Matejkova P."/>
            <person name="Strouhal M."/>
            <person name="Smajs D."/>
            <person name="Norris S.J."/>
            <person name="Palzkill T."/>
            <person name="Petrosino J.F."/>
            <person name="Sodergren E."/>
            <person name="Norton J.E."/>
            <person name="Singh J."/>
            <person name="Richmond T.A."/>
            <person name="Molla M.N."/>
            <person name="Albert T.J."/>
            <person name="Weinstock G.M."/>
        </authorList>
    </citation>
    <scope>NUCLEOTIDE SEQUENCE [LARGE SCALE GENOMIC DNA]</scope>
    <source>
        <strain>SS14</strain>
    </source>
</reference>
<dbReference type="EC" id="2.1.1.182" evidence="1"/>
<dbReference type="EMBL" id="CP000805">
    <property type="protein sequence ID" value="ACD70763.1"/>
    <property type="molecule type" value="Genomic_DNA"/>
</dbReference>
<dbReference type="RefSeq" id="WP_010881785.1">
    <property type="nucleotide sequence ID" value="NC_021508.1"/>
</dbReference>
<dbReference type="SMR" id="B2S2T4"/>
<dbReference type="GeneID" id="93876116"/>
<dbReference type="KEGG" id="tpp:TPASS_0337"/>
<dbReference type="PATRIC" id="fig|455434.6.peg.337"/>
<dbReference type="Proteomes" id="UP000001202">
    <property type="component" value="Chromosome"/>
</dbReference>
<dbReference type="GO" id="GO:0005829">
    <property type="term" value="C:cytosol"/>
    <property type="evidence" value="ECO:0007669"/>
    <property type="project" value="TreeGrafter"/>
</dbReference>
<dbReference type="GO" id="GO:0052908">
    <property type="term" value="F:16S rRNA (adenine(1518)-N(6)/adenine(1519)-N(6))-dimethyltransferase activity"/>
    <property type="evidence" value="ECO:0007669"/>
    <property type="project" value="UniProtKB-EC"/>
</dbReference>
<dbReference type="GO" id="GO:0003723">
    <property type="term" value="F:RNA binding"/>
    <property type="evidence" value="ECO:0007669"/>
    <property type="project" value="UniProtKB-KW"/>
</dbReference>
<dbReference type="CDD" id="cd02440">
    <property type="entry name" value="AdoMet_MTases"/>
    <property type="match status" value="1"/>
</dbReference>
<dbReference type="Gene3D" id="1.10.8.100">
    <property type="entry name" value="Ribosomal RNA adenine dimethylase-like, domain 2"/>
    <property type="match status" value="1"/>
</dbReference>
<dbReference type="Gene3D" id="3.40.50.150">
    <property type="entry name" value="Vaccinia Virus protein VP39"/>
    <property type="match status" value="1"/>
</dbReference>
<dbReference type="HAMAP" id="MF_00607">
    <property type="entry name" value="16SrRNA_methyltr_A"/>
    <property type="match status" value="1"/>
</dbReference>
<dbReference type="InterPro" id="IPR001737">
    <property type="entry name" value="KsgA/Erm"/>
</dbReference>
<dbReference type="InterPro" id="IPR023165">
    <property type="entry name" value="rRNA_Ade_diMease-like_C"/>
</dbReference>
<dbReference type="InterPro" id="IPR020596">
    <property type="entry name" value="rRNA_Ade_Mease_Trfase_CS"/>
</dbReference>
<dbReference type="InterPro" id="IPR020598">
    <property type="entry name" value="rRNA_Ade_methylase_Trfase_N"/>
</dbReference>
<dbReference type="InterPro" id="IPR011530">
    <property type="entry name" value="rRNA_adenine_dimethylase"/>
</dbReference>
<dbReference type="InterPro" id="IPR029063">
    <property type="entry name" value="SAM-dependent_MTases_sf"/>
</dbReference>
<dbReference type="NCBIfam" id="TIGR00755">
    <property type="entry name" value="ksgA"/>
    <property type="match status" value="1"/>
</dbReference>
<dbReference type="PANTHER" id="PTHR11727">
    <property type="entry name" value="DIMETHYLADENOSINE TRANSFERASE"/>
    <property type="match status" value="1"/>
</dbReference>
<dbReference type="PANTHER" id="PTHR11727:SF7">
    <property type="entry name" value="DIMETHYLADENOSINE TRANSFERASE-RELATED"/>
    <property type="match status" value="1"/>
</dbReference>
<dbReference type="Pfam" id="PF00398">
    <property type="entry name" value="RrnaAD"/>
    <property type="match status" value="1"/>
</dbReference>
<dbReference type="SMART" id="SM00650">
    <property type="entry name" value="rADc"/>
    <property type="match status" value="1"/>
</dbReference>
<dbReference type="SUPFAM" id="SSF53335">
    <property type="entry name" value="S-adenosyl-L-methionine-dependent methyltransferases"/>
    <property type="match status" value="1"/>
</dbReference>
<dbReference type="PROSITE" id="PS01131">
    <property type="entry name" value="RRNA_A_DIMETH"/>
    <property type="match status" value="1"/>
</dbReference>
<dbReference type="PROSITE" id="PS51689">
    <property type="entry name" value="SAM_RNA_A_N6_MT"/>
    <property type="match status" value="1"/>
</dbReference>
<accession>B2S2T4</accession>
<proteinExistence type="inferred from homology"/>